<organism>
    <name type="scientific">Mus musculus</name>
    <name type="common">Mouse</name>
    <dbReference type="NCBI Taxonomy" id="10090"/>
    <lineage>
        <taxon>Eukaryota</taxon>
        <taxon>Metazoa</taxon>
        <taxon>Chordata</taxon>
        <taxon>Craniata</taxon>
        <taxon>Vertebrata</taxon>
        <taxon>Euteleostomi</taxon>
        <taxon>Mammalia</taxon>
        <taxon>Eutheria</taxon>
        <taxon>Euarchontoglires</taxon>
        <taxon>Glires</taxon>
        <taxon>Rodentia</taxon>
        <taxon>Myomorpha</taxon>
        <taxon>Muroidea</taxon>
        <taxon>Muridae</taxon>
        <taxon>Murinae</taxon>
        <taxon>Mus</taxon>
        <taxon>Mus</taxon>
    </lineage>
</organism>
<evidence type="ECO:0000250" key="1">
    <source>
        <dbReference type="UniProtKB" id="Q9UK97"/>
    </source>
</evidence>
<evidence type="ECO:0000255" key="2">
    <source>
        <dbReference type="PROSITE-ProRule" id="PRU00080"/>
    </source>
</evidence>
<evidence type="ECO:0000256" key="3">
    <source>
        <dbReference type="SAM" id="MobiDB-lite"/>
    </source>
</evidence>
<evidence type="ECO:0000269" key="4">
    <source>
    </source>
</evidence>
<evidence type="ECO:0000269" key="5">
    <source>
    </source>
</evidence>
<evidence type="ECO:0000303" key="6">
    <source>
    </source>
</evidence>
<evidence type="ECO:0000303" key="7">
    <source>
    </source>
</evidence>
<evidence type="ECO:0000303" key="8">
    <source ref="1"/>
</evidence>
<evidence type="ECO:0000305" key="9"/>
<evidence type="ECO:0007744" key="10">
    <source>
    </source>
</evidence>
<evidence type="ECO:0007744" key="11">
    <source>
    </source>
</evidence>
<name>FBX9_MOUSE</name>
<accession>Q8BK06</accession>
<accession>Q8VDY6</accession>
<accession>Q9D349</accession>
<accession>Q9JJC5</accession>
<keyword id="KW-0007">Acetylation</keyword>
<keyword id="KW-0025">Alternative splicing</keyword>
<keyword id="KW-0963">Cytoplasm</keyword>
<keyword id="KW-0597">Phosphoprotein</keyword>
<keyword id="KW-1185">Reference proteome</keyword>
<keyword id="KW-0802">TPR repeat</keyword>
<keyword id="KW-0833">Ubl conjugation pathway</keyword>
<dbReference type="EMBL" id="AB041585">
    <property type="protein sequence ID" value="BAA95068.1"/>
    <property type="status" value="ALT_FRAME"/>
    <property type="molecule type" value="mRNA"/>
</dbReference>
<dbReference type="EMBL" id="AK077607">
    <property type="protein sequence ID" value="BAC36897.1"/>
    <property type="molecule type" value="mRNA"/>
</dbReference>
<dbReference type="EMBL" id="AK018482">
    <property type="protein sequence ID" value="BAB31231.1"/>
    <property type="molecule type" value="mRNA"/>
</dbReference>
<dbReference type="EMBL" id="BC020074">
    <property type="protein sequence ID" value="AAH20074.1"/>
    <property type="molecule type" value="mRNA"/>
</dbReference>
<dbReference type="CCDS" id="CCDS52863.1">
    <molecule id="Q8BK06-2"/>
</dbReference>
<dbReference type="CCDS" id="CCDS52864.1">
    <molecule id="Q8BK06-1"/>
</dbReference>
<dbReference type="RefSeq" id="NP_001074959.1">
    <molecule id="Q8BK06-1"/>
    <property type="nucleotide sequence ID" value="NM_001081490.2"/>
</dbReference>
<dbReference type="RefSeq" id="NP_076094.2">
    <molecule id="Q8BK06-2"/>
    <property type="nucleotide sequence ID" value="NM_023605.2"/>
</dbReference>
<dbReference type="BioGRID" id="214770">
    <property type="interactions" value="7"/>
</dbReference>
<dbReference type="FunCoup" id="Q8BK06">
    <property type="interactions" value="459"/>
</dbReference>
<dbReference type="STRING" id="10090.ENSMUSP00000001402"/>
<dbReference type="iPTMnet" id="Q8BK06"/>
<dbReference type="PhosphoSitePlus" id="Q8BK06"/>
<dbReference type="PaxDb" id="10090-ENSMUSP00000001402"/>
<dbReference type="ProteomicsDB" id="270969">
    <molecule id="Q8BK06-1"/>
</dbReference>
<dbReference type="ProteomicsDB" id="270970">
    <molecule id="Q8BK06-2"/>
</dbReference>
<dbReference type="ProteomicsDB" id="270971">
    <molecule id="Q8BK06-3"/>
</dbReference>
<dbReference type="Antibodypedia" id="30968">
    <property type="antibodies" value="171 antibodies from 25 providers"/>
</dbReference>
<dbReference type="DNASU" id="71538"/>
<dbReference type="Ensembl" id="ENSMUST00000001402.14">
    <molecule id="Q8BK06-1"/>
    <property type="protein sequence ID" value="ENSMUSP00000001402.8"/>
    <property type="gene ID" value="ENSMUSG00000001366.15"/>
</dbReference>
<dbReference type="Ensembl" id="ENSMUST00000085311.13">
    <molecule id="Q8BK06-2"/>
    <property type="protein sequence ID" value="ENSMUSP00000082419.7"/>
    <property type="gene ID" value="ENSMUSG00000001366.15"/>
</dbReference>
<dbReference type="Ensembl" id="ENSMUST00000159099.8">
    <molecule id="Q8BK06-3"/>
    <property type="protein sequence ID" value="ENSMUSP00000125381.2"/>
    <property type="gene ID" value="ENSMUSG00000001366.15"/>
</dbReference>
<dbReference type="GeneID" id="71538"/>
<dbReference type="KEGG" id="mmu:71538"/>
<dbReference type="UCSC" id="uc033jlp.1">
    <molecule id="Q8BK06-2"/>
    <property type="organism name" value="mouse"/>
</dbReference>
<dbReference type="UCSC" id="uc033jlr.1">
    <molecule id="Q8BK06-1"/>
    <property type="organism name" value="mouse"/>
</dbReference>
<dbReference type="AGR" id="MGI:1918788"/>
<dbReference type="CTD" id="26268"/>
<dbReference type="MGI" id="MGI:1918788">
    <property type="gene designation" value="Fbxo9"/>
</dbReference>
<dbReference type="VEuPathDB" id="HostDB:ENSMUSG00000001366"/>
<dbReference type="eggNOG" id="KOG2997">
    <property type="taxonomic scope" value="Eukaryota"/>
</dbReference>
<dbReference type="GeneTree" id="ENSGT00390000014256"/>
<dbReference type="HOGENOM" id="CLU_041758_0_0_1"/>
<dbReference type="InParanoid" id="Q8BK06"/>
<dbReference type="OMA" id="RWNRLDF"/>
<dbReference type="OrthoDB" id="2117972at2759"/>
<dbReference type="PhylomeDB" id="Q8BK06"/>
<dbReference type="TreeFam" id="TF324797"/>
<dbReference type="Reactome" id="R-MMU-8951664">
    <property type="pathway name" value="Neddylation"/>
</dbReference>
<dbReference type="Reactome" id="R-MMU-983168">
    <property type="pathway name" value="Antigen processing: Ubiquitination &amp; Proteasome degradation"/>
</dbReference>
<dbReference type="UniPathway" id="UPA00143"/>
<dbReference type="BioGRID-ORCS" id="71538">
    <property type="hits" value="1 hit in 78 CRISPR screens"/>
</dbReference>
<dbReference type="ChiTaRS" id="Fbxo9">
    <property type="organism name" value="mouse"/>
</dbReference>
<dbReference type="PRO" id="PR:Q8BK06"/>
<dbReference type="Proteomes" id="UP000000589">
    <property type="component" value="Chromosome 9"/>
</dbReference>
<dbReference type="RNAct" id="Q8BK06">
    <property type="molecule type" value="protein"/>
</dbReference>
<dbReference type="Bgee" id="ENSMUSG00000001366">
    <property type="expression patterns" value="Expressed in medial vestibular nucleus and 261 other cell types or tissues"/>
</dbReference>
<dbReference type="ExpressionAtlas" id="Q8BK06">
    <property type="expression patterns" value="baseline and differential"/>
</dbReference>
<dbReference type="GO" id="GO:0005737">
    <property type="term" value="C:cytoplasm"/>
    <property type="evidence" value="ECO:0000250"/>
    <property type="project" value="UniProtKB"/>
</dbReference>
<dbReference type="GO" id="GO:0019005">
    <property type="term" value="C:SCF ubiquitin ligase complex"/>
    <property type="evidence" value="ECO:0000250"/>
    <property type="project" value="UniProtKB"/>
</dbReference>
<dbReference type="GO" id="GO:1990756">
    <property type="term" value="F:ubiquitin-like ligase-substrate adaptor activity"/>
    <property type="evidence" value="ECO:0007669"/>
    <property type="project" value="Ensembl"/>
</dbReference>
<dbReference type="GO" id="GO:0045444">
    <property type="term" value="P:fat cell differentiation"/>
    <property type="evidence" value="ECO:0000315"/>
    <property type="project" value="MGI"/>
</dbReference>
<dbReference type="GO" id="GO:0045087">
    <property type="term" value="P:innate immune response"/>
    <property type="evidence" value="ECO:0000315"/>
    <property type="project" value="MGI"/>
</dbReference>
<dbReference type="GO" id="GO:0070936">
    <property type="term" value="P:protein K48-linked ubiquitination"/>
    <property type="evidence" value="ECO:0007669"/>
    <property type="project" value="Ensembl"/>
</dbReference>
<dbReference type="GO" id="GO:0016567">
    <property type="term" value="P:protein ubiquitination"/>
    <property type="evidence" value="ECO:0000250"/>
    <property type="project" value="UniProtKB"/>
</dbReference>
<dbReference type="GO" id="GO:0032006">
    <property type="term" value="P:regulation of TOR signaling"/>
    <property type="evidence" value="ECO:0000250"/>
    <property type="project" value="UniProtKB"/>
</dbReference>
<dbReference type="GO" id="GO:0031146">
    <property type="term" value="P:SCF-dependent proteasomal ubiquitin-dependent protein catabolic process"/>
    <property type="evidence" value="ECO:0000250"/>
    <property type="project" value="UniProtKB"/>
</dbReference>
<dbReference type="CDD" id="cd22089">
    <property type="entry name" value="F-box_FBXO9"/>
    <property type="match status" value="1"/>
</dbReference>
<dbReference type="FunFam" id="1.20.1280.50:FF:000012">
    <property type="entry name" value="F-box only protein 9"/>
    <property type="match status" value="1"/>
</dbReference>
<dbReference type="Gene3D" id="1.20.1280.50">
    <property type="match status" value="1"/>
</dbReference>
<dbReference type="InterPro" id="IPR036047">
    <property type="entry name" value="F-box-like_dom_sf"/>
</dbReference>
<dbReference type="InterPro" id="IPR001810">
    <property type="entry name" value="F-box_dom"/>
</dbReference>
<dbReference type="InterPro" id="IPR045464">
    <property type="entry name" value="Hrt3/FBXO9_C"/>
</dbReference>
<dbReference type="InterPro" id="IPR036181">
    <property type="entry name" value="MIT_dom_sf"/>
</dbReference>
<dbReference type="PANTHER" id="PTHR12874">
    <property type="entry name" value="F-BOX ONLY PROTEIN 48-RELATED"/>
    <property type="match status" value="1"/>
</dbReference>
<dbReference type="PANTHER" id="PTHR12874:SF29">
    <property type="entry name" value="F-BOX ONLY PROTEIN 9"/>
    <property type="match status" value="1"/>
</dbReference>
<dbReference type="Pfam" id="PF12937">
    <property type="entry name" value="F-box-like"/>
    <property type="match status" value="1"/>
</dbReference>
<dbReference type="Pfam" id="PF19270">
    <property type="entry name" value="FBO_C"/>
    <property type="match status" value="1"/>
</dbReference>
<dbReference type="SUPFAM" id="SSF81383">
    <property type="entry name" value="F-box domain"/>
    <property type="match status" value="1"/>
</dbReference>
<dbReference type="SUPFAM" id="SSF116846">
    <property type="entry name" value="MIT domain"/>
    <property type="match status" value="1"/>
</dbReference>
<dbReference type="PROSITE" id="PS50181">
    <property type="entry name" value="FBOX"/>
    <property type="match status" value="1"/>
</dbReference>
<comment type="function">
    <text evidence="1 4 5">Substrate recognition component of a SCF (SKP1-CUL1-F-box protein) E3 ubiquitin-protein ligase complex which mediates the ubiquitination and subsequent proteasomal degradation of target proteins and plays a role in several biological processes such as cell cycle, cell proliferation, or maintenance of chromosome stability. Ubiquitinates mTORC1-bound TTI1 and TELO2 when they are phosphorylated by CK2 following growth factor deprivation, leading to their degradation. In contrast, does not mediate ubiquitination of TTI1 and TELO2 when they are part of the mTORC2 complex. As a consequence, mTORC1 is inactivated to restrain cell growth and protein translation, while mTORC2 is the activated due to the relief of feedback inhibition by mTORC1 (By similarity). Plays a role in maintaining epithelial cell survival by regulating the turn-over of chromatin modulator PRMT4 through ubiquitination and degradation by the proteasomal pathway (By similarity). Also regulates PPARgamma stability by facilitating PPARgamma/PPARG ubiquitination and thereby plays a role in adipocyte differentiation (PubMed:23643813, PubMed:27197753).</text>
</comment>
<comment type="pathway">
    <text>Protein modification; protein ubiquitination.</text>
</comment>
<comment type="subunit">
    <text evidence="1">Part of the SCF (SKP1-CUL1-F-box) E3 ubiquitin-protein ligase complex SCF(FBXO9) composed of CUL1, SKP1, RBX1 and FBXO9. Interacts with TTI1 and TELO2; when TTI1 and TELO2 are phosphorylated by CK2.</text>
</comment>
<comment type="subcellular location">
    <subcellularLocation>
        <location evidence="1">Cytoplasm</location>
    </subcellularLocation>
</comment>
<comment type="alternative products">
    <event type="alternative splicing"/>
    <isoform>
        <id>Q8BK06-1</id>
        <name>1</name>
        <sequence type="displayed"/>
    </isoform>
    <isoform>
        <id>Q8BK06-2</id>
        <name>2</name>
        <sequence type="described" ref="VSP_012929"/>
    </isoform>
    <isoform>
        <id>Q8BK06-3</id>
        <name>3</name>
        <sequence type="described" ref="VSP_012929 VSP_012930 VSP_012931"/>
    </isoform>
</comment>
<comment type="sequence caution" evidence="9">
    <conflict type="frameshift">
        <sequence resource="EMBL-CDS" id="BAA95068"/>
    </conflict>
</comment>
<reference key="1">
    <citation type="submission" date="2000-04" db="EMBL/GenBank/DDBJ databases">
        <title>Isolation of full-length cDNA clones from mouse brain cDNA library made by oligo-capping method.</title>
        <authorList>
            <person name="Osada N."/>
            <person name="Kusuda J."/>
            <person name="Tanuma R."/>
            <person name="Ito A."/>
            <person name="Hirata M."/>
            <person name="Sugano S."/>
            <person name="Hashimoto K."/>
        </authorList>
    </citation>
    <scope>NUCLEOTIDE SEQUENCE [LARGE SCALE MRNA] (ISOFORM 2)</scope>
    <source>
        <strain>C57BL/6J</strain>
        <tissue>Brain</tissue>
    </source>
</reference>
<reference key="2">
    <citation type="journal article" date="2005" name="Science">
        <title>The transcriptional landscape of the mammalian genome.</title>
        <authorList>
            <person name="Carninci P."/>
            <person name="Kasukawa T."/>
            <person name="Katayama S."/>
            <person name="Gough J."/>
            <person name="Frith M.C."/>
            <person name="Maeda N."/>
            <person name="Oyama R."/>
            <person name="Ravasi T."/>
            <person name="Lenhard B."/>
            <person name="Wells C."/>
            <person name="Kodzius R."/>
            <person name="Shimokawa K."/>
            <person name="Bajic V.B."/>
            <person name="Brenner S.E."/>
            <person name="Batalov S."/>
            <person name="Forrest A.R."/>
            <person name="Zavolan M."/>
            <person name="Davis M.J."/>
            <person name="Wilming L.G."/>
            <person name="Aidinis V."/>
            <person name="Allen J.E."/>
            <person name="Ambesi-Impiombato A."/>
            <person name="Apweiler R."/>
            <person name="Aturaliya R.N."/>
            <person name="Bailey T.L."/>
            <person name="Bansal M."/>
            <person name="Baxter L."/>
            <person name="Beisel K.W."/>
            <person name="Bersano T."/>
            <person name="Bono H."/>
            <person name="Chalk A.M."/>
            <person name="Chiu K.P."/>
            <person name="Choudhary V."/>
            <person name="Christoffels A."/>
            <person name="Clutterbuck D.R."/>
            <person name="Crowe M.L."/>
            <person name="Dalla E."/>
            <person name="Dalrymple B.P."/>
            <person name="de Bono B."/>
            <person name="Della Gatta G."/>
            <person name="di Bernardo D."/>
            <person name="Down T."/>
            <person name="Engstrom P."/>
            <person name="Fagiolini M."/>
            <person name="Faulkner G."/>
            <person name="Fletcher C.F."/>
            <person name="Fukushima T."/>
            <person name="Furuno M."/>
            <person name="Futaki S."/>
            <person name="Gariboldi M."/>
            <person name="Georgii-Hemming P."/>
            <person name="Gingeras T.R."/>
            <person name="Gojobori T."/>
            <person name="Green R.E."/>
            <person name="Gustincich S."/>
            <person name="Harbers M."/>
            <person name="Hayashi Y."/>
            <person name="Hensch T.K."/>
            <person name="Hirokawa N."/>
            <person name="Hill D."/>
            <person name="Huminiecki L."/>
            <person name="Iacono M."/>
            <person name="Ikeo K."/>
            <person name="Iwama A."/>
            <person name="Ishikawa T."/>
            <person name="Jakt M."/>
            <person name="Kanapin A."/>
            <person name="Katoh M."/>
            <person name="Kawasawa Y."/>
            <person name="Kelso J."/>
            <person name="Kitamura H."/>
            <person name="Kitano H."/>
            <person name="Kollias G."/>
            <person name="Krishnan S.P."/>
            <person name="Kruger A."/>
            <person name="Kummerfeld S.K."/>
            <person name="Kurochkin I.V."/>
            <person name="Lareau L.F."/>
            <person name="Lazarevic D."/>
            <person name="Lipovich L."/>
            <person name="Liu J."/>
            <person name="Liuni S."/>
            <person name="McWilliam S."/>
            <person name="Madan Babu M."/>
            <person name="Madera M."/>
            <person name="Marchionni L."/>
            <person name="Matsuda H."/>
            <person name="Matsuzawa S."/>
            <person name="Miki H."/>
            <person name="Mignone F."/>
            <person name="Miyake S."/>
            <person name="Morris K."/>
            <person name="Mottagui-Tabar S."/>
            <person name="Mulder N."/>
            <person name="Nakano N."/>
            <person name="Nakauchi H."/>
            <person name="Ng P."/>
            <person name="Nilsson R."/>
            <person name="Nishiguchi S."/>
            <person name="Nishikawa S."/>
            <person name="Nori F."/>
            <person name="Ohara O."/>
            <person name="Okazaki Y."/>
            <person name="Orlando V."/>
            <person name="Pang K.C."/>
            <person name="Pavan W.J."/>
            <person name="Pavesi G."/>
            <person name="Pesole G."/>
            <person name="Petrovsky N."/>
            <person name="Piazza S."/>
            <person name="Reed J."/>
            <person name="Reid J.F."/>
            <person name="Ring B.Z."/>
            <person name="Ringwald M."/>
            <person name="Rost B."/>
            <person name="Ruan Y."/>
            <person name="Salzberg S.L."/>
            <person name="Sandelin A."/>
            <person name="Schneider C."/>
            <person name="Schoenbach C."/>
            <person name="Sekiguchi K."/>
            <person name="Semple C.A."/>
            <person name="Seno S."/>
            <person name="Sessa L."/>
            <person name="Sheng Y."/>
            <person name="Shibata Y."/>
            <person name="Shimada H."/>
            <person name="Shimada K."/>
            <person name="Silva D."/>
            <person name="Sinclair B."/>
            <person name="Sperling S."/>
            <person name="Stupka E."/>
            <person name="Sugiura K."/>
            <person name="Sultana R."/>
            <person name="Takenaka Y."/>
            <person name="Taki K."/>
            <person name="Tammoja K."/>
            <person name="Tan S.L."/>
            <person name="Tang S."/>
            <person name="Taylor M.S."/>
            <person name="Tegner J."/>
            <person name="Teichmann S.A."/>
            <person name="Ueda H.R."/>
            <person name="van Nimwegen E."/>
            <person name="Verardo R."/>
            <person name="Wei C.L."/>
            <person name="Yagi K."/>
            <person name="Yamanishi H."/>
            <person name="Zabarovsky E."/>
            <person name="Zhu S."/>
            <person name="Zimmer A."/>
            <person name="Hide W."/>
            <person name="Bult C."/>
            <person name="Grimmond S.M."/>
            <person name="Teasdale R.D."/>
            <person name="Liu E.T."/>
            <person name="Brusic V."/>
            <person name="Quackenbush J."/>
            <person name="Wahlestedt C."/>
            <person name="Mattick J.S."/>
            <person name="Hume D.A."/>
            <person name="Kai C."/>
            <person name="Sasaki D."/>
            <person name="Tomaru Y."/>
            <person name="Fukuda S."/>
            <person name="Kanamori-Katayama M."/>
            <person name="Suzuki M."/>
            <person name="Aoki J."/>
            <person name="Arakawa T."/>
            <person name="Iida J."/>
            <person name="Imamura K."/>
            <person name="Itoh M."/>
            <person name="Kato T."/>
            <person name="Kawaji H."/>
            <person name="Kawagashira N."/>
            <person name="Kawashima T."/>
            <person name="Kojima M."/>
            <person name="Kondo S."/>
            <person name="Konno H."/>
            <person name="Nakano K."/>
            <person name="Ninomiya N."/>
            <person name="Nishio T."/>
            <person name="Okada M."/>
            <person name="Plessy C."/>
            <person name="Shibata K."/>
            <person name="Shiraki T."/>
            <person name="Suzuki S."/>
            <person name="Tagami M."/>
            <person name="Waki K."/>
            <person name="Watahiki A."/>
            <person name="Okamura-Oho Y."/>
            <person name="Suzuki H."/>
            <person name="Kawai J."/>
            <person name="Hayashizaki Y."/>
        </authorList>
    </citation>
    <scope>NUCLEOTIDE SEQUENCE [LARGE SCALE MRNA] (ISOFORMS 1 AND 3)</scope>
    <source>
        <strain>C57BL/6J</strain>
        <tissue>Colon</tissue>
        <tissue>Embryo</tissue>
    </source>
</reference>
<reference key="3">
    <citation type="journal article" date="2004" name="Genome Res.">
        <title>The status, quality, and expansion of the NIH full-length cDNA project: the Mammalian Gene Collection (MGC).</title>
        <authorList>
            <consortium name="The MGC Project Team"/>
        </authorList>
    </citation>
    <scope>NUCLEOTIDE SEQUENCE [LARGE SCALE MRNA] (ISOFORM 2)</scope>
    <source>
        <strain>FVB/N</strain>
        <tissue>Mammary tumor</tissue>
    </source>
</reference>
<reference key="4">
    <citation type="journal article" date="2007" name="Proc. Natl. Acad. Sci. U.S.A.">
        <title>Large-scale phosphorylation analysis of mouse liver.</title>
        <authorList>
            <person name="Villen J."/>
            <person name="Beausoleil S.A."/>
            <person name="Gerber S.A."/>
            <person name="Gygi S.P."/>
        </authorList>
    </citation>
    <scope>ACETYLATION [LARGE SCALE ANALYSIS] AT ALA-2 (ISOFORMS 2 AND 3)</scope>
    <scope>PHOSPHORYLATION [LARGE SCALE ANALYSIS] AT SER-126</scope>
    <scope>PHOSPHORYLATION [LARGE SCALE ANALYSIS] AT SER-10 (ISOFORMS 2 AND 3)</scope>
    <scope>CLEAVAGE OF INITIATOR METHIONINE [LARGE SCALE ANALYSIS] (ISOFORM 2)</scope>
    <scope>CLEAVAGE OF INITIATOR METHIONINE [LARGE SCALE ANALYSIS] (ISOFORM 3)</scope>
    <scope>IDENTIFICATION BY MASS SPECTROMETRY [LARGE SCALE ANALYSIS]</scope>
    <source>
        <tissue>Liver</tissue>
    </source>
</reference>
<reference key="5">
    <citation type="journal article" date="2010" name="Cell">
        <title>A tissue-specific atlas of mouse protein phosphorylation and expression.</title>
        <authorList>
            <person name="Huttlin E.L."/>
            <person name="Jedrychowski M.P."/>
            <person name="Elias J.E."/>
            <person name="Goswami T."/>
            <person name="Rad R."/>
            <person name="Beausoleil S.A."/>
            <person name="Villen J."/>
            <person name="Haas W."/>
            <person name="Sowa M.E."/>
            <person name="Gygi S.P."/>
        </authorList>
    </citation>
    <scope>PHOSPHORYLATION [LARGE SCALE ANALYSIS] AT SER-126</scope>
    <scope>IDENTIFICATION BY MASS SPECTROMETRY [LARGE SCALE ANALYSIS]</scope>
    <source>
        <tissue>Brain</tissue>
        <tissue>Kidney</tissue>
        <tissue>Lung</tissue>
        <tissue>Spleen</tissue>
        <tissue>Testis</tissue>
    </source>
</reference>
<reference key="6">
    <citation type="journal article" date="2013" name="Biochem. Biophys. Res. Commun.">
        <title>F-box only protein 9 is required for adipocyte differentiation.</title>
        <authorList>
            <person name="Lee K.W."/>
            <person name="Kwak S.H."/>
            <person name="Ahn B.Y."/>
            <person name="Lee H.M."/>
            <person name="Jung H.S."/>
            <person name="Cho Y.M."/>
            <person name="Park Y.J."/>
            <person name="Chung S.S."/>
            <person name="Park K.S."/>
        </authorList>
    </citation>
    <scope>FUNCTION</scope>
</reference>
<reference key="7">
    <citation type="journal article" date="2016" name="Exp. Mol. Med.">
        <title>F-box only protein 9 is an E3 ubiquitin ligase of PPARgamma.</title>
        <authorList>
            <person name="Lee K.W."/>
            <person name="Kwak S.H."/>
            <person name="Koo Y.D."/>
            <person name="Cho Y.K."/>
            <person name="Lee H.M."/>
            <person name="Jung H.S."/>
            <person name="Cho Y.M."/>
            <person name="Park Y.J."/>
            <person name="Chung S.S."/>
            <person name="Park K.S."/>
        </authorList>
    </citation>
    <scope>FUNCTION</scope>
</reference>
<feature type="chain" id="PRO_0000119887" description="F-box only protein 9">
    <location>
        <begin position="1"/>
        <end position="437"/>
    </location>
</feature>
<feature type="repeat" description="TPR">
    <location>
        <begin position="84"/>
        <end position="117"/>
    </location>
</feature>
<feature type="domain" description="F-box" evidence="2">
    <location>
        <begin position="175"/>
        <end position="226"/>
    </location>
</feature>
<feature type="region of interest" description="Disordered" evidence="3">
    <location>
        <begin position="1"/>
        <end position="26"/>
    </location>
</feature>
<feature type="compositionally biased region" description="Basic and acidic residues" evidence="3">
    <location>
        <begin position="8"/>
        <end position="26"/>
    </location>
</feature>
<feature type="modified residue" description="Phosphoserine" evidence="10 11">
    <location>
        <position position="126"/>
    </location>
</feature>
<feature type="splice variant" id="VSP_012929" description="In isoform 2 and isoform 3." evidence="6 7 8">
    <original>MS</original>
    <variation>M</variation>
    <location>
        <begin position="1"/>
        <end position="2"/>
    </location>
</feature>
<feature type="splice variant" id="VSP_012930" description="In isoform 3." evidence="7">
    <original>VLPMEVLMYIFRWVVS</original>
    <variation>GVAPWLLSLRNPWTSG</variation>
    <location>
        <begin position="180"/>
        <end position="195"/>
    </location>
</feature>
<feature type="splice variant" id="VSP_012931" description="In isoform 3." evidence="7">
    <location>
        <begin position="196"/>
        <end position="437"/>
    </location>
</feature>
<feature type="sequence conflict" description="In Ref. 2; BAB31231." evidence="9" ref="2">
    <original>F</original>
    <variation>C</variation>
    <location>
        <position position="42"/>
    </location>
</feature>
<feature type="initiator methionine" description="Removed" evidence="10">
    <location sequence="Q8BK06-2">
        <position position="1"/>
    </location>
</feature>
<feature type="modified residue" description="N-acetylalanine" evidence="10">
    <location sequence="Q8BK06-2">
        <position position="2"/>
    </location>
</feature>
<feature type="modified residue" description="Phosphoserine" evidence="10">
    <location sequence="Q8BK06-2">
        <position position="10"/>
    </location>
</feature>
<feature type="initiator methionine" description="Removed" evidence="10">
    <location sequence="Q8BK06-3">
        <position position="1"/>
    </location>
</feature>
<feature type="modified residue" description="N-acetylalanine" evidence="10">
    <location sequence="Q8BK06-3">
        <position position="2"/>
    </location>
</feature>
<feature type="modified residue" description="Phosphoserine" evidence="10">
    <location sequence="Q8BK06-3">
        <position position="10"/>
    </location>
</feature>
<sequence>MSAEAEEDCHSDADRVGDEGNESPAERDLQAQLQMFRAQWMFELTPGVGSSHGETRPCRAGRSSMLKAAADTKGRQELAKEEKARELFLQAVEEEQNGALYEAIKFYRRAMQLVPDIEFKITYTRSPDGDGVGSGYIEENEDASKMADLLSYFQQQLTLQESVLKLCQPELETSQTHISVLPMEVLMYIFRWVVSSDLDLRSLEQLSLVCRGFYICARDPEIWRLACLKVWGRSCMKLVPYASWREMFLERPRVRFDGVYISKTTYIRQGEQSLDGFYRAWHQVEYYRYMRFFPDGHVMMLTTPEEPPSIVPRLRTRNTRTDAILLGHYRLSQDADNQTKVFAVITKKKEEKPLDHKYRYFRRVPVQEADHSFHVGLQLCSSGHQRFNKLIWIHHSCHITYKATGETAVSAFEIDKMYTPLLFARVRSYTAFSERPL</sequence>
<protein>
    <recommendedName>
        <fullName>F-box only protein 9</fullName>
    </recommendedName>
</protein>
<proteinExistence type="evidence at protein level"/>
<gene>
    <name type="primary">Fbxo9</name>
    <name type="ORF">MNCb-2471</name>
</gene>